<comment type="function">
    <text evidence="1">Necessary for normal cell division and for the maintenance of normal septation.</text>
</comment>
<comment type="cofactor">
    <cofactor evidence="1">
        <name>Mg(2+)</name>
        <dbReference type="ChEBI" id="CHEBI:18420"/>
    </cofactor>
</comment>
<comment type="similarity">
    <text evidence="1">Belongs to the TRAFAC class TrmE-Era-EngA-EngB-Septin-like GTPase superfamily. EngB GTPase family.</text>
</comment>
<protein>
    <recommendedName>
        <fullName evidence="1">Probable GTP-binding protein EngB</fullName>
    </recommendedName>
</protein>
<sequence>MKVNPNNIELIISAVKEEQYPETELSEVALSGRSNVGKSTFINSMIGRKNMARTSQQPGKTQTLNFYNIDEQLIFVDVPGYGYAKVSKTQREKFGKMIEEYITKRENLQLVIQLVDLRHDPTQDDILMYNYLKHFDIPTLVICTKEDKIPKGKVQKHIKNIKTQLDMDPDDTIVSYSSIQNNKQQQIWNLIEPYIS</sequence>
<reference key="1">
    <citation type="journal article" date="2001" name="Lancet">
        <title>Whole genome sequencing of meticillin-resistant Staphylococcus aureus.</title>
        <authorList>
            <person name="Kuroda M."/>
            <person name="Ohta T."/>
            <person name="Uchiyama I."/>
            <person name="Baba T."/>
            <person name="Yuzawa H."/>
            <person name="Kobayashi I."/>
            <person name="Cui L."/>
            <person name="Oguchi A."/>
            <person name="Aoki K."/>
            <person name="Nagai Y."/>
            <person name="Lian J.-Q."/>
            <person name="Ito T."/>
            <person name="Kanamori M."/>
            <person name="Matsumaru H."/>
            <person name="Maruyama A."/>
            <person name="Murakami H."/>
            <person name="Hosoyama A."/>
            <person name="Mizutani-Ui Y."/>
            <person name="Takahashi N.K."/>
            <person name="Sawano T."/>
            <person name="Inoue R."/>
            <person name="Kaito C."/>
            <person name="Sekimizu K."/>
            <person name="Hirakawa H."/>
            <person name="Kuhara S."/>
            <person name="Goto S."/>
            <person name="Yabuzaki J."/>
            <person name="Kanehisa M."/>
            <person name="Yamashita A."/>
            <person name="Oshima K."/>
            <person name="Furuya K."/>
            <person name="Yoshino C."/>
            <person name="Shiba T."/>
            <person name="Hattori M."/>
            <person name="Ogasawara N."/>
            <person name="Hayashi H."/>
            <person name="Hiramatsu K."/>
        </authorList>
    </citation>
    <scope>NUCLEOTIDE SEQUENCE [LARGE SCALE GENOMIC DNA]</scope>
    <source>
        <strain>Mu50 / ATCC 700699</strain>
    </source>
</reference>
<accession>P64070</accession>
<accession>Q99TI8</accession>
<feature type="chain" id="PRO_0000157781" description="Probable GTP-binding protein EngB">
    <location>
        <begin position="1"/>
        <end position="196"/>
    </location>
</feature>
<feature type="domain" description="EngB-type G" evidence="1">
    <location>
        <begin position="24"/>
        <end position="196"/>
    </location>
</feature>
<feature type="binding site" evidence="1">
    <location>
        <begin position="32"/>
        <end position="39"/>
    </location>
    <ligand>
        <name>GTP</name>
        <dbReference type="ChEBI" id="CHEBI:37565"/>
    </ligand>
</feature>
<feature type="binding site" evidence="1">
    <location>
        <position position="39"/>
    </location>
    <ligand>
        <name>Mg(2+)</name>
        <dbReference type="ChEBI" id="CHEBI:18420"/>
    </ligand>
</feature>
<feature type="binding site" evidence="1">
    <location>
        <begin position="59"/>
        <end position="63"/>
    </location>
    <ligand>
        <name>GTP</name>
        <dbReference type="ChEBI" id="CHEBI:37565"/>
    </ligand>
</feature>
<feature type="binding site" evidence="1">
    <location>
        <position position="61"/>
    </location>
    <ligand>
        <name>Mg(2+)</name>
        <dbReference type="ChEBI" id="CHEBI:18420"/>
    </ligand>
</feature>
<feature type="binding site" evidence="1">
    <location>
        <begin position="77"/>
        <end position="80"/>
    </location>
    <ligand>
        <name>GTP</name>
        <dbReference type="ChEBI" id="CHEBI:37565"/>
    </ligand>
</feature>
<feature type="binding site" evidence="1">
    <location>
        <begin position="144"/>
        <end position="147"/>
    </location>
    <ligand>
        <name>GTP</name>
        <dbReference type="ChEBI" id="CHEBI:37565"/>
    </ligand>
</feature>
<feature type="binding site" evidence="1">
    <location>
        <begin position="176"/>
        <end position="178"/>
    </location>
    <ligand>
        <name>GTP</name>
        <dbReference type="ChEBI" id="CHEBI:37565"/>
    </ligand>
</feature>
<keyword id="KW-0131">Cell cycle</keyword>
<keyword id="KW-0132">Cell division</keyword>
<keyword id="KW-0342">GTP-binding</keyword>
<keyword id="KW-0460">Magnesium</keyword>
<keyword id="KW-0479">Metal-binding</keyword>
<keyword id="KW-0547">Nucleotide-binding</keyword>
<keyword id="KW-0717">Septation</keyword>
<gene>
    <name evidence="1" type="primary">engB</name>
    <name type="ordered locus">SAV1673</name>
</gene>
<evidence type="ECO:0000255" key="1">
    <source>
        <dbReference type="HAMAP-Rule" id="MF_00321"/>
    </source>
</evidence>
<dbReference type="EMBL" id="BA000017">
    <property type="protein sequence ID" value="BAB57835.1"/>
    <property type="molecule type" value="Genomic_DNA"/>
</dbReference>
<dbReference type="SMR" id="P64070"/>
<dbReference type="KEGG" id="sav:SAV1673"/>
<dbReference type="HOGENOM" id="CLU_033732_3_0_9"/>
<dbReference type="PhylomeDB" id="P64070"/>
<dbReference type="Proteomes" id="UP000002481">
    <property type="component" value="Chromosome"/>
</dbReference>
<dbReference type="GO" id="GO:0005829">
    <property type="term" value="C:cytosol"/>
    <property type="evidence" value="ECO:0007669"/>
    <property type="project" value="TreeGrafter"/>
</dbReference>
<dbReference type="GO" id="GO:0005525">
    <property type="term" value="F:GTP binding"/>
    <property type="evidence" value="ECO:0007669"/>
    <property type="project" value="UniProtKB-UniRule"/>
</dbReference>
<dbReference type="GO" id="GO:0046872">
    <property type="term" value="F:metal ion binding"/>
    <property type="evidence" value="ECO:0007669"/>
    <property type="project" value="UniProtKB-KW"/>
</dbReference>
<dbReference type="GO" id="GO:0000917">
    <property type="term" value="P:division septum assembly"/>
    <property type="evidence" value="ECO:0007669"/>
    <property type="project" value="UniProtKB-KW"/>
</dbReference>
<dbReference type="CDD" id="cd01876">
    <property type="entry name" value="YihA_EngB"/>
    <property type="match status" value="1"/>
</dbReference>
<dbReference type="FunFam" id="3.40.50.300:FF:000098">
    <property type="entry name" value="Probable GTP-binding protein EngB"/>
    <property type="match status" value="1"/>
</dbReference>
<dbReference type="Gene3D" id="3.40.50.300">
    <property type="entry name" value="P-loop containing nucleotide triphosphate hydrolases"/>
    <property type="match status" value="1"/>
</dbReference>
<dbReference type="HAMAP" id="MF_00321">
    <property type="entry name" value="GTPase_EngB"/>
    <property type="match status" value="1"/>
</dbReference>
<dbReference type="InterPro" id="IPR030393">
    <property type="entry name" value="G_ENGB_dom"/>
</dbReference>
<dbReference type="InterPro" id="IPR006073">
    <property type="entry name" value="GTP-bd"/>
</dbReference>
<dbReference type="InterPro" id="IPR019987">
    <property type="entry name" value="GTP-bd_ribosome_bio_YsxC"/>
</dbReference>
<dbReference type="InterPro" id="IPR027417">
    <property type="entry name" value="P-loop_NTPase"/>
</dbReference>
<dbReference type="NCBIfam" id="TIGR03598">
    <property type="entry name" value="GTPase_YsxC"/>
    <property type="match status" value="1"/>
</dbReference>
<dbReference type="PANTHER" id="PTHR11649:SF13">
    <property type="entry name" value="ENGB-TYPE G DOMAIN-CONTAINING PROTEIN"/>
    <property type="match status" value="1"/>
</dbReference>
<dbReference type="PANTHER" id="PTHR11649">
    <property type="entry name" value="MSS1/TRME-RELATED GTP-BINDING PROTEIN"/>
    <property type="match status" value="1"/>
</dbReference>
<dbReference type="Pfam" id="PF01926">
    <property type="entry name" value="MMR_HSR1"/>
    <property type="match status" value="1"/>
</dbReference>
<dbReference type="SUPFAM" id="SSF52540">
    <property type="entry name" value="P-loop containing nucleoside triphosphate hydrolases"/>
    <property type="match status" value="1"/>
</dbReference>
<dbReference type="PROSITE" id="PS51706">
    <property type="entry name" value="G_ENGB"/>
    <property type="match status" value="1"/>
</dbReference>
<name>ENGB_STAAM</name>
<proteinExistence type="inferred from homology"/>
<organism>
    <name type="scientific">Staphylococcus aureus (strain Mu50 / ATCC 700699)</name>
    <dbReference type="NCBI Taxonomy" id="158878"/>
    <lineage>
        <taxon>Bacteria</taxon>
        <taxon>Bacillati</taxon>
        <taxon>Bacillota</taxon>
        <taxon>Bacilli</taxon>
        <taxon>Bacillales</taxon>
        <taxon>Staphylococcaceae</taxon>
        <taxon>Staphylococcus</taxon>
    </lineage>
</organism>